<protein>
    <recommendedName>
        <fullName evidence="1">Octanoyltransferase</fullName>
        <ecNumber evidence="1">2.3.1.181</ecNumber>
    </recommendedName>
    <alternativeName>
        <fullName evidence="1">Lipoate-protein ligase B</fullName>
    </alternativeName>
    <alternativeName>
        <fullName evidence="1">Lipoyl/octanoyl transferase</fullName>
    </alternativeName>
    <alternativeName>
        <fullName evidence="1">Octanoyl-[acyl-carrier-protein]-protein N-octanoyltransferase</fullName>
    </alternativeName>
</protein>
<dbReference type="EC" id="2.3.1.181" evidence="1"/>
<dbReference type="EMBL" id="L42023">
    <property type="protein sequence ID" value="AAC21705.1"/>
    <property type="molecule type" value="Genomic_DNA"/>
</dbReference>
<dbReference type="PIR" id="H64043">
    <property type="entry name" value="H64043"/>
</dbReference>
<dbReference type="RefSeq" id="NP_438200.1">
    <property type="nucleotide sequence ID" value="NC_000907.1"/>
</dbReference>
<dbReference type="SMR" id="P44464"/>
<dbReference type="STRING" id="71421.HI_0027"/>
<dbReference type="EnsemblBacteria" id="AAC21705">
    <property type="protein sequence ID" value="AAC21705"/>
    <property type="gene ID" value="HI_0027"/>
</dbReference>
<dbReference type="KEGG" id="hin:HI_0027"/>
<dbReference type="PATRIC" id="fig|71421.8.peg.27"/>
<dbReference type="eggNOG" id="COG0321">
    <property type="taxonomic scope" value="Bacteria"/>
</dbReference>
<dbReference type="HOGENOM" id="CLU_035168_3_1_6"/>
<dbReference type="OrthoDB" id="9787061at2"/>
<dbReference type="PhylomeDB" id="P44464"/>
<dbReference type="BioCyc" id="HINF71421:G1GJ1-27-MONOMER"/>
<dbReference type="UniPathway" id="UPA00538">
    <property type="reaction ID" value="UER00592"/>
</dbReference>
<dbReference type="Proteomes" id="UP000000579">
    <property type="component" value="Chromosome"/>
</dbReference>
<dbReference type="GO" id="GO:0005737">
    <property type="term" value="C:cytoplasm"/>
    <property type="evidence" value="ECO:0007669"/>
    <property type="project" value="UniProtKB-SubCell"/>
</dbReference>
<dbReference type="GO" id="GO:0033819">
    <property type="term" value="F:lipoyl(octanoyl) transferase activity"/>
    <property type="evidence" value="ECO:0000318"/>
    <property type="project" value="GO_Central"/>
</dbReference>
<dbReference type="GO" id="GO:0036211">
    <property type="term" value="P:protein modification process"/>
    <property type="evidence" value="ECO:0007669"/>
    <property type="project" value="InterPro"/>
</dbReference>
<dbReference type="CDD" id="cd16444">
    <property type="entry name" value="LipB"/>
    <property type="match status" value="1"/>
</dbReference>
<dbReference type="FunFam" id="3.30.930.10:FF:000020">
    <property type="entry name" value="Octanoyltransferase"/>
    <property type="match status" value="1"/>
</dbReference>
<dbReference type="Gene3D" id="3.30.930.10">
    <property type="entry name" value="Bira Bifunctional Protein, Domain 2"/>
    <property type="match status" value="1"/>
</dbReference>
<dbReference type="HAMAP" id="MF_00013">
    <property type="entry name" value="LipB"/>
    <property type="match status" value="1"/>
</dbReference>
<dbReference type="InterPro" id="IPR045864">
    <property type="entry name" value="aa-tRNA-synth_II/BPL/LPL"/>
</dbReference>
<dbReference type="InterPro" id="IPR004143">
    <property type="entry name" value="BPL_LPL_catalytic"/>
</dbReference>
<dbReference type="InterPro" id="IPR000544">
    <property type="entry name" value="Octanoyltransferase"/>
</dbReference>
<dbReference type="InterPro" id="IPR020605">
    <property type="entry name" value="Octanoyltransferase_CS"/>
</dbReference>
<dbReference type="NCBIfam" id="TIGR00214">
    <property type="entry name" value="lipB"/>
    <property type="match status" value="1"/>
</dbReference>
<dbReference type="NCBIfam" id="NF010922">
    <property type="entry name" value="PRK14342.1"/>
    <property type="match status" value="1"/>
</dbReference>
<dbReference type="PANTHER" id="PTHR10993:SF7">
    <property type="entry name" value="LIPOYLTRANSFERASE 2, MITOCHONDRIAL-RELATED"/>
    <property type="match status" value="1"/>
</dbReference>
<dbReference type="PANTHER" id="PTHR10993">
    <property type="entry name" value="OCTANOYLTRANSFERASE"/>
    <property type="match status" value="1"/>
</dbReference>
<dbReference type="Pfam" id="PF21948">
    <property type="entry name" value="LplA-B_cat"/>
    <property type="match status" value="1"/>
</dbReference>
<dbReference type="PIRSF" id="PIRSF016262">
    <property type="entry name" value="LPLase"/>
    <property type="match status" value="1"/>
</dbReference>
<dbReference type="SUPFAM" id="SSF55681">
    <property type="entry name" value="Class II aaRS and biotin synthetases"/>
    <property type="match status" value="1"/>
</dbReference>
<dbReference type="PROSITE" id="PS51733">
    <property type="entry name" value="BPL_LPL_CATALYTIC"/>
    <property type="match status" value="1"/>
</dbReference>
<dbReference type="PROSITE" id="PS01313">
    <property type="entry name" value="LIPB"/>
    <property type="match status" value="1"/>
</dbReference>
<organism>
    <name type="scientific">Haemophilus influenzae (strain ATCC 51907 / DSM 11121 / KW20 / Rd)</name>
    <dbReference type="NCBI Taxonomy" id="71421"/>
    <lineage>
        <taxon>Bacteria</taxon>
        <taxon>Pseudomonadati</taxon>
        <taxon>Pseudomonadota</taxon>
        <taxon>Gammaproteobacteria</taxon>
        <taxon>Pasteurellales</taxon>
        <taxon>Pasteurellaceae</taxon>
        <taxon>Haemophilus</taxon>
    </lineage>
</organism>
<reference key="1">
    <citation type="journal article" date="1995" name="Science">
        <title>Whole-genome random sequencing and assembly of Haemophilus influenzae Rd.</title>
        <authorList>
            <person name="Fleischmann R.D."/>
            <person name="Adams M.D."/>
            <person name="White O."/>
            <person name="Clayton R.A."/>
            <person name="Kirkness E.F."/>
            <person name="Kerlavage A.R."/>
            <person name="Bult C.J."/>
            <person name="Tomb J.-F."/>
            <person name="Dougherty B.A."/>
            <person name="Merrick J.M."/>
            <person name="McKenney K."/>
            <person name="Sutton G.G."/>
            <person name="FitzHugh W."/>
            <person name="Fields C.A."/>
            <person name="Gocayne J.D."/>
            <person name="Scott J.D."/>
            <person name="Shirley R."/>
            <person name="Liu L.-I."/>
            <person name="Glodek A."/>
            <person name="Kelley J.M."/>
            <person name="Weidman J.F."/>
            <person name="Phillips C.A."/>
            <person name="Spriggs T."/>
            <person name="Hedblom E."/>
            <person name="Cotton M.D."/>
            <person name="Utterback T.R."/>
            <person name="Hanna M.C."/>
            <person name="Nguyen D.T."/>
            <person name="Saudek D.M."/>
            <person name="Brandon R.C."/>
            <person name="Fine L.D."/>
            <person name="Fritchman J.L."/>
            <person name="Fuhrmann J.L."/>
            <person name="Geoghagen N.S.M."/>
            <person name="Gnehm C.L."/>
            <person name="McDonald L.A."/>
            <person name="Small K.V."/>
            <person name="Fraser C.M."/>
            <person name="Smith H.O."/>
            <person name="Venter J.C."/>
        </authorList>
    </citation>
    <scope>NUCLEOTIDE SEQUENCE [LARGE SCALE GENOMIC DNA]</scope>
    <source>
        <strain>ATCC 51907 / DSM 11121 / KW20 / Rd</strain>
    </source>
</reference>
<accession>P44464</accession>
<proteinExistence type="inferred from homology"/>
<feature type="chain" id="PRO_0000062841" description="Octanoyltransferase">
    <location>
        <begin position="1"/>
        <end position="212"/>
    </location>
</feature>
<feature type="domain" description="BPL/LPL catalytic" evidence="2">
    <location>
        <begin position="31"/>
        <end position="209"/>
    </location>
</feature>
<feature type="active site" description="Acyl-thioester intermediate" evidence="1">
    <location>
        <position position="169"/>
    </location>
</feature>
<feature type="binding site" evidence="1">
    <location>
        <begin position="70"/>
        <end position="77"/>
    </location>
    <ligand>
        <name>substrate</name>
    </ligand>
</feature>
<feature type="binding site" evidence="1">
    <location>
        <begin position="138"/>
        <end position="140"/>
    </location>
    <ligand>
        <name>substrate</name>
    </ligand>
</feature>
<feature type="binding site" evidence="1">
    <location>
        <begin position="151"/>
        <end position="153"/>
    </location>
    <ligand>
        <name>substrate</name>
    </ligand>
</feature>
<feature type="site" description="Lowers pKa of active site Cys" evidence="1">
    <location>
        <position position="135"/>
    </location>
</feature>
<name>LIPB_HAEIN</name>
<keyword id="KW-0012">Acyltransferase</keyword>
<keyword id="KW-0963">Cytoplasm</keyword>
<keyword id="KW-1185">Reference proteome</keyword>
<keyword id="KW-0808">Transferase</keyword>
<gene>
    <name evidence="1" type="primary">lipB</name>
    <name type="ordered locus">HI_0027</name>
</gene>
<sequence length="212" mass="24058">MNNSLIVRQLGLQDYQEIWHKMQDFTDTRNAETQDEIWLVQHYPVFTQGQAGKPEHLLQRSEIPVVQSVRGGQITYHAPGQQVMYVLIDIKRHKNLNVRQLVTALEQTVVKTLAEYGIESYPKPDAPGVYVDGKKICSLGLRIRRGCSFHGLALNINMDLNPFHYINPCGYAGLEMCQLADFVNQDKADCDNVSAKLIKHFANLLGYNITTL</sequence>
<evidence type="ECO:0000255" key="1">
    <source>
        <dbReference type="HAMAP-Rule" id="MF_00013"/>
    </source>
</evidence>
<evidence type="ECO:0000255" key="2">
    <source>
        <dbReference type="PROSITE-ProRule" id="PRU01067"/>
    </source>
</evidence>
<comment type="function">
    <text evidence="1">Catalyzes the transfer of endogenously produced octanoic acid from octanoyl-acyl-carrier-protein onto the lipoyl domains of lipoate-dependent enzymes. Lipoyl-ACP can also act as a substrate although octanoyl-ACP is likely to be the physiological substrate.</text>
</comment>
<comment type="catalytic activity">
    <reaction evidence="1">
        <text>octanoyl-[ACP] + L-lysyl-[protein] = N(6)-octanoyl-L-lysyl-[protein] + holo-[ACP] + H(+)</text>
        <dbReference type="Rhea" id="RHEA:17665"/>
        <dbReference type="Rhea" id="RHEA-COMP:9636"/>
        <dbReference type="Rhea" id="RHEA-COMP:9685"/>
        <dbReference type="Rhea" id="RHEA-COMP:9752"/>
        <dbReference type="Rhea" id="RHEA-COMP:9928"/>
        <dbReference type="ChEBI" id="CHEBI:15378"/>
        <dbReference type="ChEBI" id="CHEBI:29969"/>
        <dbReference type="ChEBI" id="CHEBI:64479"/>
        <dbReference type="ChEBI" id="CHEBI:78463"/>
        <dbReference type="ChEBI" id="CHEBI:78809"/>
        <dbReference type="EC" id="2.3.1.181"/>
    </reaction>
</comment>
<comment type="pathway">
    <text evidence="1">Protein modification; protein lipoylation via endogenous pathway; protein N(6)-(lipoyl)lysine from octanoyl-[acyl-carrier-protein]: step 1/2.</text>
</comment>
<comment type="subcellular location">
    <subcellularLocation>
        <location evidence="1">Cytoplasm</location>
    </subcellularLocation>
</comment>
<comment type="miscellaneous">
    <text evidence="1">In the reaction, the free carboxyl group of octanoic acid is attached via an amide linkage to the epsilon-amino group of a specific lysine residue of lipoyl domains of lipoate-dependent enzymes.</text>
</comment>
<comment type="similarity">
    <text evidence="1">Belongs to the LipB family.</text>
</comment>